<evidence type="ECO:0000250" key="1">
    <source>
        <dbReference type="UniProtKB" id="Q8TPT3"/>
    </source>
</evidence>
<evidence type="ECO:0000255" key="2">
    <source>
        <dbReference type="PROSITE-ProRule" id="PRU00711"/>
    </source>
</evidence>
<comment type="function">
    <text evidence="1">Required for O-acetylhomoserine sulfhydrylase (OAHS)-independent homocysteine (Hcy) biosynthesis. Together with MJ0100, catalyzes the condensation of sulfide with aspartate semialdehyde to generate homocysteine. May be involved in the reduction of the disulfide formed in MJ0100.</text>
</comment>
<comment type="cofactor">
    <cofactor evidence="2">
        <name>[4Fe-4S] cluster</name>
        <dbReference type="ChEBI" id="CHEBI:49883"/>
    </cofactor>
    <text evidence="2">Binds 2 [4Fe-4S] cluster.</text>
</comment>
<comment type="pathway">
    <text evidence="1">Amino-acid biosynthesis.</text>
</comment>
<comment type="subunit">
    <text evidence="1">May form a complex with MJ0100.</text>
</comment>
<keyword id="KW-0004">4Fe-4S</keyword>
<keyword id="KW-0028">Amino-acid biosynthesis</keyword>
<keyword id="KW-0249">Electron transport</keyword>
<keyword id="KW-0408">Iron</keyword>
<keyword id="KW-0411">Iron-sulfur</keyword>
<keyword id="KW-0479">Metal-binding</keyword>
<keyword id="KW-0486">Methionine biosynthesis</keyword>
<keyword id="KW-1185">Reference proteome</keyword>
<keyword id="KW-0677">Repeat</keyword>
<keyword id="KW-0813">Transport</keyword>
<gene>
    <name type="ordered locus">MJ0099</name>
</gene>
<organism>
    <name type="scientific">Methanocaldococcus jannaschii (strain ATCC 43067 / DSM 2661 / JAL-1 / JCM 10045 / NBRC 100440)</name>
    <name type="common">Methanococcus jannaschii</name>
    <dbReference type="NCBI Taxonomy" id="243232"/>
    <lineage>
        <taxon>Archaea</taxon>
        <taxon>Methanobacteriati</taxon>
        <taxon>Methanobacteriota</taxon>
        <taxon>Methanomada group</taxon>
        <taxon>Methanococci</taxon>
        <taxon>Methanococcales</taxon>
        <taxon>Methanocaldococcaceae</taxon>
        <taxon>Methanocaldococcus</taxon>
    </lineage>
</organism>
<proteinExistence type="inferred from homology"/>
<reference key="1">
    <citation type="journal article" date="1996" name="Science">
        <title>Complete genome sequence of the methanogenic archaeon, Methanococcus jannaschii.</title>
        <authorList>
            <person name="Bult C.J."/>
            <person name="White O."/>
            <person name="Olsen G.J."/>
            <person name="Zhou L."/>
            <person name="Fleischmann R.D."/>
            <person name="Sutton G.G."/>
            <person name="Blake J.A."/>
            <person name="FitzGerald L.M."/>
            <person name="Clayton R.A."/>
            <person name="Gocayne J.D."/>
            <person name="Kerlavage A.R."/>
            <person name="Dougherty B.A."/>
            <person name="Tomb J.-F."/>
            <person name="Adams M.D."/>
            <person name="Reich C.I."/>
            <person name="Overbeek R."/>
            <person name="Kirkness E.F."/>
            <person name="Weinstock K.G."/>
            <person name="Merrick J.M."/>
            <person name="Glodek A."/>
            <person name="Scott J.L."/>
            <person name="Geoghagen N.S.M."/>
            <person name="Weidman J.F."/>
            <person name="Fuhrmann J.L."/>
            <person name="Nguyen D."/>
            <person name="Utterback T.R."/>
            <person name="Kelley J.M."/>
            <person name="Peterson J.D."/>
            <person name="Sadow P.W."/>
            <person name="Hanna M.C."/>
            <person name="Cotton M.D."/>
            <person name="Roberts K.M."/>
            <person name="Hurst M.A."/>
            <person name="Kaine B.P."/>
            <person name="Borodovsky M."/>
            <person name="Klenk H.-P."/>
            <person name="Fraser C.M."/>
            <person name="Smith H.O."/>
            <person name="Woese C.R."/>
            <person name="Venter J.C."/>
        </authorList>
    </citation>
    <scope>NUCLEOTIDE SEQUENCE [LARGE SCALE GENOMIC DNA]</scope>
    <source>
        <strain>ATCC 43067 / DSM 2661 / JAL-1 / JCM 10045 / NBRC 100440</strain>
    </source>
</reference>
<feature type="chain" id="PRO_0000159130" description="L-aspartate semialdehyde sulfurtransferase iron-sulfur subunit">
    <location>
        <begin position="1"/>
        <end position="131"/>
    </location>
</feature>
<feature type="domain" description="4Fe-4S ferredoxin-type 1" evidence="2">
    <location>
        <begin position="73"/>
        <end position="102"/>
    </location>
</feature>
<feature type="domain" description="4Fe-4S ferredoxin-type 2" evidence="2">
    <location>
        <begin position="103"/>
        <end position="131"/>
    </location>
</feature>
<feature type="binding site" evidence="2">
    <location>
        <position position="82"/>
    </location>
    <ligand>
        <name>[4Fe-4S] cluster</name>
        <dbReference type="ChEBI" id="CHEBI:49883"/>
        <label>1</label>
    </ligand>
</feature>
<feature type="binding site" evidence="2">
    <location>
        <position position="85"/>
    </location>
    <ligand>
        <name>[4Fe-4S] cluster</name>
        <dbReference type="ChEBI" id="CHEBI:49883"/>
        <label>1</label>
    </ligand>
</feature>
<feature type="binding site" evidence="2">
    <location>
        <position position="88"/>
    </location>
    <ligand>
        <name>[4Fe-4S] cluster</name>
        <dbReference type="ChEBI" id="CHEBI:49883"/>
        <label>1</label>
    </ligand>
</feature>
<feature type="binding site" evidence="2">
    <location>
        <position position="92"/>
    </location>
    <ligand>
        <name>[4Fe-4S] cluster</name>
        <dbReference type="ChEBI" id="CHEBI:49883"/>
        <label>2</label>
    </ligand>
</feature>
<feature type="binding site" evidence="2">
    <location>
        <position position="112"/>
    </location>
    <ligand>
        <name>[4Fe-4S] cluster</name>
        <dbReference type="ChEBI" id="CHEBI:49883"/>
        <label>2</label>
    </ligand>
</feature>
<feature type="binding site" evidence="2">
    <location>
        <position position="115"/>
    </location>
    <ligand>
        <name>[4Fe-4S] cluster</name>
        <dbReference type="ChEBI" id="CHEBI:49883"/>
        <label>2</label>
    </ligand>
</feature>
<feature type="binding site" evidence="2">
    <location>
        <position position="118"/>
    </location>
    <ligand>
        <name>[4Fe-4S] cluster</name>
        <dbReference type="ChEBI" id="CHEBI:49883"/>
        <label>2</label>
    </ligand>
</feature>
<feature type="binding site" evidence="2">
    <location>
        <position position="122"/>
    </location>
    <ligand>
        <name>[4Fe-4S] cluster</name>
        <dbReference type="ChEBI" id="CHEBI:49883"/>
        <label>1</label>
    </ligand>
</feature>
<protein>
    <recommendedName>
        <fullName evidence="1">L-aspartate semialdehyde sulfurtransferase iron-sulfur subunit</fullName>
    </recommendedName>
</protein>
<accession>Q57563</accession>
<name>ASSTI_METJA</name>
<sequence length="131" mass="15105">MRKRVYYWTDSEHINKPVISDTILNTGVKINILKAKVEPQEAFLILELFGSKETIEKALNYLSKFGEVEEISKVIKRDLEKCVHCGCCITQCPINVIYMDEDYNVVFKEEDCVGCKNCLKACPFKAIEIFE</sequence>
<dbReference type="EMBL" id="L77117">
    <property type="protein sequence ID" value="AAB98079.1"/>
    <property type="molecule type" value="Genomic_DNA"/>
</dbReference>
<dbReference type="PIR" id="C64312">
    <property type="entry name" value="C64312"/>
</dbReference>
<dbReference type="RefSeq" id="WP_010869591.1">
    <property type="nucleotide sequence ID" value="NC_000909.1"/>
</dbReference>
<dbReference type="SMR" id="Q57563"/>
<dbReference type="FunCoup" id="Q57563">
    <property type="interactions" value="20"/>
</dbReference>
<dbReference type="STRING" id="243232.MJ_0099"/>
<dbReference type="PaxDb" id="243232-MJ_0099"/>
<dbReference type="EnsemblBacteria" id="AAB98079">
    <property type="protein sequence ID" value="AAB98079"/>
    <property type="gene ID" value="MJ_0099"/>
</dbReference>
<dbReference type="GeneID" id="1450938"/>
<dbReference type="KEGG" id="mja:MJ_0099"/>
<dbReference type="eggNOG" id="arCOG02460">
    <property type="taxonomic scope" value="Archaea"/>
</dbReference>
<dbReference type="HOGENOM" id="CLU_152999_0_0_2"/>
<dbReference type="InParanoid" id="Q57563"/>
<dbReference type="OrthoDB" id="15347at2157"/>
<dbReference type="PhylomeDB" id="Q57563"/>
<dbReference type="Proteomes" id="UP000000805">
    <property type="component" value="Chromosome"/>
</dbReference>
<dbReference type="GO" id="GO:0051539">
    <property type="term" value="F:4 iron, 4 sulfur cluster binding"/>
    <property type="evidence" value="ECO:0007669"/>
    <property type="project" value="UniProtKB-KW"/>
</dbReference>
<dbReference type="GO" id="GO:0046872">
    <property type="term" value="F:metal ion binding"/>
    <property type="evidence" value="ECO:0007669"/>
    <property type="project" value="UniProtKB-KW"/>
</dbReference>
<dbReference type="GO" id="GO:0016491">
    <property type="term" value="F:oxidoreductase activity"/>
    <property type="evidence" value="ECO:0007669"/>
    <property type="project" value="UniProtKB-ARBA"/>
</dbReference>
<dbReference type="GO" id="GO:0009086">
    <property type="term" value="P:methionine biosynthetic process"/>
    <property type="evidence" value="ECO:0007669"/>
    <property type="project" value="UniProtKB-KW"/>
</dbReference>
<dbReference type="Gene3D" id="3.30.70.20">
    <property type="match status" value="1"/>
</dbReference>
<dbReference type="Gene3D" id="3.30.70.260">
    <property type="match status" value="1"/>
</dbReference>
<dbReference type="InterPro" id="IPR017896">
    <property type="entry name" value="4Fe4S_Fe-S-bd"/>
</dbReference>
<dbReference type="InterPro" id="IPR017900">
    <property type="entry name" value="4Fe4S_Fe_S_CS"/>
</dbReference>
<dbReference type="InterPro" id="IPR045865">
    <property type="entry name" value="ACT-like_dom_sf"/>
</dbReference>
<dbReference type="InterPro" id="IPR050572">
    <property type="entry name" value="Fe-S_Ferredoxin"/>
</dbReference>
<dbReference type="InterPro" id="IPR018449">
    <property type="entry name" value="NIL_domain"/>
</dbReference>
<dbReference type="PANTHER" id="PTHR43687">
    <property type="entry name" value="ADENYLYLSULFATE REDUCTASE, BETA SUBUNIT"/>
    <property type="match status" value="1"/>
</dbReference>
<dbReference type="PANTHER" id="PTHR43687:SF6">
    <property type="entry name" value="L-ASPARTATE SEMIALDEHYDE SULFURTRANSFERASE IRON-SULFUR SUBUNIT"/>
    <property type="match status" value="1"/>
</dbReference>
<dbReference type="Pfam" id="PF12838">
    <property type="entry name" value="Fer4_7"/>
    <property type="match status" value="1"/>
</dbReference>
<dbReference type="Pfam" id="PF09383">
    <property type="entry name" value="NIL"/>
    <property type="match status" value="1"/>
</dbReference>
<dbReference type="SMART" id="SM00930">
    <property type="entry name" value="NIL"/>
    <property type="match status" value="1"/>
</dbReference>
<dbReference type="SUPFAM" id="SSF54862">
    <property type="entry name" value="4Fe-4S ferredoxins"/>
    <property type="match status" value="1"/>
</dbReference>
<dbReference type="SUPFAM" id="SSF55021">
    <property type="entry name" value="ACT-like"/>
    <property type="match status" value="1"/>
</dbReference>
<dbReference type="PROSITE" id="PS00198">
    <property type="entry name" value="4FE4S_FER_1"/>
    <property type="match status" value="2"/>
</dbReference>
<dbReference type="PROSITE" id="PS51379">
    <property type="entry name" value="4FE4S_FER_2"/>
    <property type="match status" value="2"/>
</dbReference>